<evidence type="ECO:0000255" key="1"/>
<evidence type="ECO:0000256" key="2">
    <source>
        <dbReference type="SAM" id="MobiDB-lite"/>
    </source>
</evidence>
<evidence type="ECO:0000303" key="3">
    <source>
    </source>
</evidence>
<evidence type="ECO:0000305" key="4"/>
<organism>
    <name type="scientific">Mus musculus</name>
    <name type="common">Mouse</name>
    <dbReference type="NCBI Taxonomy" id="10090"/>
    <lineage>
        <taxon>Eukaryota</taxon>
        <taxon>Metazoa</taxon>
        <taxon>Chordata</taxon>
        <taxon>Craniata</taxon>
        <taxon>Vertebrata</taxon>
        <taxon>Euteleostomi</taxon>
        <taxon>Mammalia</taxon>
        <taxon>Eutheria</taxon>
        <taxon>Euarchontoglires</taxon>
        <taxon>Glires</taxon>
        <taxon>Rodentia</taxon>
        <taxon>Myomorpha</taxon>
        <taxon>Muroidea</taxon>
        <taxon>Muridae</taxon>
        <taxon>Murinae</taxon>
        <taxon>Mus</taxon>
        <taxon>Mus</taxon>
    </lineage>
</organism>
<protein>
    <recommendedName>
        <fullName>Transmembrane protein 92</fullName>
    </recommendedName>
</protein>
<reference key="1">
    <citation type="journal article" date="2005" name="Science">
        <title>The transcriptional landscape of the mammalian genome.</title>
        <authorList>
            <person name="Carninci P."/>
            <person name="Kasukawa T."/>
            <person name="Katayama S."/>
            <person name="Gough J."/>
            <person name="Frith M.C."/>
            <person name="Maeda N."/>
            <person name="Oyama R."/>
            <person name="Ravasi T."/>
            <person name="Lenhard B."/>
            <person name="Wells C."/>
            <person name="Kodzius R."/>
            <person name="Shimokawa K."/>
            <person name="Bajic V.B."/>
            <person name="Brenner S.E."/>
            <person name="Batalov S."/>
            <person name="Forrest A.R."/>
            <person name="Zavolan M."/>
            <person name="Davis M.J."/>
            <person name="Wilming L.G."/>
            <person name="Aidinis V."/>
            <person name="Allen J.E."/>
            <person name="Ambesi-Impiombato A."/>
            <person name="Apweiler R."/>
            <person name="Aturaliya R.N."/>
            <person name="Bailey T.L."/>
            <person name="Bansal M."/>
            <person name="Baxter L."/>
            <person name="Beisel K.W."/>
            <person name="Bersano T."/>
            <person name="Bono H."/>
            <person name="Chalk A.M."/>
            <person name="Chiu K.P."/>
            <person name="Choudhary V."/>
            <person name="Christoffels A."/>
            <person name="Clutterbuck D.R."/>
            <person name="Crowe M.L."/>
            <person name="Dalla E."/>
            <person name="Dalrymple B.P."/>
            <person name="de Bono B."/>
            <person name="Della Gatta G."/>
            <person name="di Bernardo D."/>
            <person name="Down T."/>
            <person name="Engstrom P."/>
            <person name="Fagiolini M."/>
            <person name="Faulkner G."/>
            <person name="Fletcher C.F."/>
            <person name="Fukushima T."/>
            <person name="Furuno M."/>
            <person name="Futaki S."/>
            <person name="Gariboldi M."/>
            <person name="Georgii-Hemming P."/>
            <person name="Gingeras T.R."/>
            <person name="Gojobori T."/>
            <person name="Green R.E."/>
            <person name="Gustincich S."/>
            <person name="Harbers M."/>
            <person name="Hayashi Y."/>
            <person name="Hensch T.K."/>
            <person name="Hirokawa N."/>
            <person name="Hill D."/>
            <person name="Huminiecki L."/>
            <person name="Iacono M."/>
            <person name="Ikeo K."/>
            <person name="Iwama A."/>
            <person name="Ishikawa T."/>
            <person name="Jakt M."/>
            <person name="Kanapin A."/>
            <person name="Katoh M."/>
            <person name="Kawasawa Y."/>
            <person name="Kelso J."/>
            <person name="Kitamura H."/>
            <person name="Kitano H."/>
            <person name="Kollias G."/>
            <person name="Krishnan S.P."/>
            <person name="Kruger A."/>
            <person name="Kummerfeld S.K."/>
            <person name="Kurochkin I.V."/>
            <person name="Lareau L.F."/>
            <person name="Lazarevic D."/>
            <person name="Lipovich L."/>
            <person name="Liu J."/>
            <person name="Liuni S."/>
            <person name="McWilliam S."/>
            <person name="Madan Babu M."/>
            <person name="Madera M."/>
            <person name="Marchionni L."/>
            <person name="Matsuda H."/>
            <person name="Matsuzawa S."/>
            <person name="Miki H."/>
            <person name="Mignone F."/>
            <person name="Miyake S."/>
            <person name="Morris K."/>
            <person name="Mottagui-Tabar S."/>
            <person name="Mulder N."/>
            <person name="Nakano N."/>
            <person name="Nakauchi H."/>
            <person name="Ng P."/>
            <person name="Nilsson R."/>
            <person name="Nishiguchi S."/>
            <person name="Nishikawa S."/>
            <person name="Nori F."/>
            <person name="Ohara O."/>
            <person name="Okazaki Y."/>
            <person name="Orlando V."/>
            <person name="Pang K.C."/>
            <person name="Pavan W.J."/>
            <person name="Pavesi G."/>
            <person name="Pesole G."/>
            <person name="Petrovsky N."/>
            <person name="Piazza S."/>
            <person name="Reed J."/>
            <person name="Reid J.F."/>
            <person name="Ring B.Z."/>
            <person name="Ringwald M."/>
            <person name="Rost B."/>
            <person name="Ruan Y."/>
            <person name="Salzberg S.L."/>
            <person name="Sandelin A."/>
            <person name="Schneider C."/>
            <person name="Schoenbach C."/>
            <person name="Sekiguchi K."/>
            <person name="Semple C.A."/>
            <person name="Seno S."/>
            <person name="Sessa L."/>
            <person name="Sheng Y."/>
            <person name="Shibata Y."/>
            <person name="Shimada H."/>
            <person name="Shimada K."/>
            <person name="Silva D."/>
            <person name="Sinclair B."/>
            <person name="Sperling S."/>
            <person name="Stupka E."/>
            <person name="Sugiura K."/>
            <person name="Sultana R."/>
            <person name="Takenaka Y."/>
            <person name="Taki K."/>
            <person name="Tammoja K."/>
            <person name="Tan S.L."/>
            <person name="Tang S."/>
            <person name="Taylor M.S."/>
            <person name="Tegner J."/>
            <person name="Teichmann S.A."/>
            <person name="Ueda H.R."/>
            <person name="van Nimwegen E."/>
            <person name="Verardo R."/>
            <person name="Wei C.L."/>
            <person name="Yagi K."/>
            <person name="Yamanishi H."/>
            <person name="Zabarovsky E."/>
            <person name="Zhu S."/>
            <person name="Zimmer A."/>
            <person name="Hide W."/>
            <person name="Bult C."/>
            <person name="Grimmond S.M."/>
            <person name="Teasdale R.D."/>
            <person name="Liu E.T."/>
            <person name="Brusic V."/>
            <person name="Quackenbush J."/>
            <person name="Wahlestedt C."/>
            <person name="Mattick J.S."/>
            <person name="Hume D.A."/>
            <person name="Kai C."/>
            <person name="Sasaki D."/>
            <person name="Tomaru Y."/>
            <person name="Fukuda S."/>
            <person name="Kanamori-Katayama M."/>
            <person name="Suzuki M."/>
            <person name="Aoki J."/>
            <person name="Arakawa T."/>
            <person name="Iida J."/>
            <person name="Imamura K."/>
            <person name="Itoh M."/>
            <person name="Kato T."/>
            <person name="Kawaji H."/>
            <person name="Kawagashira N."/>
            <person name="Kawashima T."/>
            <person name="Kojima M."/>
            <person name="Kondo S."/>
            <person name="Konno H."/>
            <person name="Nakano K."/>
            <person name="Ninomiya N."/>
            <person name="Nishio T."/>
            <person name="Okada M."/>
            <person name="Plessy C."/>
            <person name="Shibata K."/>
            <person name="Shiraki T."/>
            <person name="Suzuki S."/>
            <person name="Tagami M."/>
            <person name="Waki K."/>
            <person name="Watahiki A."/>
            <person name="Okamura-Oho Y."/>
            <person name="Suzuki H."/>
            <person name="Kawai J."/>
            <person name="Hayashizaki Y."/>
        </authorList>
    </citation>
    <scope>NUCLEOTIDE SEQUENCE [LARGE SCALE MRNA] (ISOFORM 2)</scope>
    <source>
        <strain>C57BL/6J</strain>
        <tissue>Egg</tissue>
    </source>
</reference>
<reference key="2">
    <citation type="journal article" date="2009" name="PLoS Biol.">
        <title>Lineage-specific biology revealed by a finished genome assembly of the mouse.</title>
        <authorList>
            <person name="Church D.M."/>
            <person name="Goodstadt L."/>
            <person name="Hillier L.W."/>
            <person name="Zody M.C."/>
            <person name="Goldstein S."/>
            <person name="She X."/>
            <person name="Bult C.J."/>
            <person name="Agarwala R."/>
            <person name="Cherry J.L."/>
            <person name="DiCuccio M."/>
            <person name="Hlavina W."/>
            <person name="Kapustin Y."/>
            <person name="Meric P."/>
            <person name="Maglott D."/>
            <person name="Birtle Z."/>
            <person name="Marques A.C."/>
            <person name="Graves T."/>
            <person name="Zhou S."/>
            <person name="Teague B."/>
            <person name="Potamousis K."/>
            <person name="Churas C."/>
            <person name="Place M."/>
            <person name="Herschleb J."/>
            <person name="Runnheim R."/>
            <person name="Forrest D."/>
            <person name="Amos-Landgraf J."/>
            <person name="Schwartz D.C."/>
            <person name="Cheng Z."/>
            <person name="Lindblad-Toh K."/>
            <person name="Eichler E.E."/>
            <person name="Ponting C.P."/>
        </authorList>
    </citation>
    <scope>NUCLEOTIDE SEQUENCE [LARGE SCALE GENOMIC DNA]</scope>
    <source>
        <strain>C57BL/6J</strain>
    </source>
</reference>
<reference key="3">
    <citation type="journal article" date="2004" name="Genome Res.">
        <title>The status, quality, and expansion of the NIH full-length cDNA project: the Mammalian Gene Collection (MGC).</title>
        <authorList>
            <consortium name="The MGC Project Team"/>
        </authorList>
    </citation>
    <scope>NUCLEOTIDE SEQUENCE [LARGE SCALE MRNA] (ISOFORM 1)</scope>
    <source>
        <tissue>Brain</tissue>
    </source>
</reference>
<comment type="subcellular location">
    <subcellularLocation>
        <location evidence="4">Membrane</location>
        <topology evidence="4">Single-pass type I membrane protein</topology>
    </subcellularLocation>
</comment>
<comment type="alternative products">
    <event type="alternative splicing"/>
    <isoform>
        <id>B7ZWI3-1</id>
        <name>1</name>
        <sequence type="displayed"/>
    </isoform>
    <isoform>
        <id>B7ZWI3-2</id>
        <name>2</name>
        <sequence type="described" ref="VSP_042507"/>
    </isoform>
</comment>
<name>TMM92_MOUSE</name>
<sequence length="162" mass="18079">MLDTWVWGTLTLTFGLLSSLQGVSFNETANTCDILNCPKGFTCCVKECCPERKVWDPANDRFRFLVILACIIFPILFICALVSLFCPNCTELQHDVRRVDHQTPIEPPSIAPLESIWVTSLDPPPPYSQVVQMTPPTEPPPPYSLRPEGPAGQMRGRAYATL</sequence>
<gene>
    <name type="primary">Tmem92</name>
</gene>
<feature type="signal peptide" evidence="1">
    <location>
        <begin position="1"/>
        <end position="22"/>
    </location>
</feature>
<feature type="chain" id="PRO_0000416120" description="Transmembrane protein 92">
    <location>
        <begin position="23"/>
        <end position="162"/>
    </location>
</feature>
<feature type="topological domain" description="Extracellular" evidence="1">
    <location>
        <begin position="23"/>
        <end position="63"/>
    </location>
</feature>
<feature type="transmembrane region" description="Helical" evidence="1">
    <location>
        <begin position="64"/>
        <end position="84"/>
    </location>
</feature>
<feature type="topological domain" description="Cytoplasmic" evidence="1">
    <location>
        <begin position="85"/>
        <end position="162"/>
    </location>
</feature>
<feature type="region of interest" description="Disordered" evidence="2">
    <location>
        <begin position="134"/>
        <end position="162"/>
    </location>
</feature>
<feature type="splice variant" id="VSP_042507" description="In isoform 2." evidence="3">
    <location>
        <begin position="83"/>
        <end position="130"/>
    </location>
</feature>
<dbReference type="EMBL" id="AK139848">
    <property type="protein sequence ID" value="BAE24159.1"/>
    <property type="molecule type" value="mRNA"/>
</dbReference>
<dbReference type="EMBL" id="AL645764">
    <property type="status" value="NOT_ANNOTATED_CDS"/>
    <property type="molecule type" value="Genomic_DNA"/>
</dbReference>
<dbReference type="EMBL" id="BC172064">
    <property type="protein sequence ID" value="AAI72064.1"/>
    <property type="molecule type" value="mRNA"/>
</dbReference>
<dbReference type="CCDS" id="CCDS36285.1">
    <molecule id="B7ZWI3-2"/>
</dbReference>
<dbReference type="CCDS" id="CCDS48890.1">
    <molecule id="B7ZWI3-1"/>
</dbReference>
<dbReference type="RefSeq" id="NP_001030068.1">
    <molecule id="B7ZWI3-2"/>
    <property type="nucleotide sequence ID" value="NM_001034896.2"/>
</dbReference>
<dbReference type="RefSeq" id="NP_001156644.1">
    <molecule id="B7ZWI3-1"/>
    <property type="nucleotide sequence ID" value="NM_001163172.1"/>
</dbReference>
<dbReference type="FunCoup" id="B7ZWI3">
    <property type="interactions" value="263"/>
</dbReference>
<dbReference type="STRING" id="10090.ENSMUSP00000125159"/>
<dbReference type="PaxDb" id="10090-ENSMUSP00000125159"/>
<dbReference type="Antibodypedia" id="68410">
    <property type="antibodies" value="10 antibodies from 5 providers"/>
</dbReference>
<dbReference type="Ensembl" id="ENSMUST00000100554.8">
    <molecule id="B7ZWI3-2"/>
    <property type="protein sequence ID" value="ENSMUSP00000128300.2"/>
    <property type="gene ID" value="ENSMUSG00000075610.10"/>
</dbReference>
<dbReference type="Ensembl" id="ENSMUST00000162809.3">
    <molecule id="B7ZWI3-1"/>
    <property type="protein sequence ID" value="ENSMUSP00000125159.3"/>
    <property type="gene ID" value="ENSMUSG00000075610.10"/>
</dbReference>
<dbReference type="GeneID" id="544806"/>
<dbReference type="KEGG" id="mmu:544806"/>
<dbReference type="UCSC" id="uc007kzl.1">
    <molecule id="B7ZWI3-2"/>
    <property type="organism name" value="mouse"/>
</dbReference>
<dbReference type="UCSC" id="uc029rno.1">
    <molecule id="B7ZWI3-1"/>
    <property type="organism name" value="mouse"/>
</dbReference>
<dbReference type="AGR" id="MGI:3034723"/>
<dbReference type="CTD" id="162461"/>
<dbReference type="MGI" id="MGI:3034723">
    <property type="gene designation" value="Tmem92"/>
</dbReference>
<dbReference type="VEuPathDB" id="HostDB:ENSMUSG00000075610"/>
<dbReference type="eggNOG" id="ENOG502TG6F">
    <property type="taxonomic scope" value="Eukaryota"/>
</dbReference>
<dbReference type="GeneTree" id="ENSGT00390000014943"/>
<dbReference type="HOGENOM" id="CLU_141701_0_0_1"/>
<dbReference type="InParanoid" id="B7ZWI3"/>
<dbReference type="OMA" id="MSQAWVT"/>
<dbReference type="OrthoDB" id="9451011at2759"/>
<dbReference type="TreeFam" id="TF338534"/>
<dbReference type="BioGRID-ORCS" id="544806">
    <property type="hits" value="0 hits in 77 CRISPR screens"/>
</dbReference>
<dbReference type="PRO" id="PR:B7ZWI3"/>
<dbReference type="Proteomes" id="UP000000589">
    <property type="component" value="Chromosome 11"/>
</dbReference>
<dbReference type="RNAct" id="B7ZWI3">
    <property type="molecule type" value="protein"/>
</dbReference>
<dbReference type="Bgee" id="ENSMUSG00000075610">
    <property type="expression patterns" value="Expressed in animal zygote and 15 other cell types or tissues"/>
</dbReference>
<dbReference type="ExpressionAtlas" id="B7ZWI3">
    <property type="expression patterns" value="baseline and differential"/>
</dbReference>
<dbReference type="GO" id="GO:0016020">
    <property type="term" value="C:membrane"/>
    <property type="evidence" value="ECO:0007669"/>
    <property type="project" value="UniProtKB-SubCell"/>
</dbReference>
<dbReference type="PANTHER" id="PTHR31359">
    <property type="entry name" value="TRANSMEMBRANE PROTEIN 92"/>
    <property type="match status" value="1"/>
</dbReference>
<dbReference type="PANTHER" id="PTHR31359:SF31">
    <property type="entry name" value="TRANSMEMBRANE PROTEIN 92"/>
    <property type="match status" value="1"/>
</dbReference>
<proteinExistence type="evidence at transcript level"/>
<keyword id="KW-0025">Alternative splicing</keyword>
<keyword id="KW-0472">Membrane</keyword>
<keyword id="KW-1185">Reference proteome</keyword>
<keyword id="KW-0732">Signal</keyword>
<keyword id="KW-0812">Transmembrane</keyword>
<keyword id="KW-1133">Transmembrane helix</keyword>
<accession>B7ZWI3</accession>
<accession>E9Q2K3</accession>
<accession>Q3UT21</accession>